<evidence type="ECO:0000269" key="1">
    <source>
    </source>
</evidence>
<keyword id="KW-0903">Direct protein sequencing</keyword>
<keyword id="KW-1015">Disulfide bond</keyword>
<sequence>KFCPEGKCV</sequence>
<organism>
    <name type="scientific">Stomopneutes variolaris</name>
    <name type="common">Sea urchin</name>
    <dbReference type="NCBI Taxonomy" id="7663"/>
    <lineage>
        <taxon>Eukaryota</taxon>
        <taxon>Metazoa</taxon>
        <taxon>Echinodermata</taxon>
        <taxon>Eleutherozoa</taxon>
        <taxon>Echinozoa</taxon>
        <taxon>Echinoidea</taxon>
        <taxon>Euechinoidea</taxon>
        <taxon>Acroechinoidea</taxon>
        <taxon>Diadematacea</taxon>
        <taxon>Phymosomatoida</taxon>
        <taxon>Stomechinidae</taxon>
        <taxon>Stomopneustes</taxon>
    </lineage>
</organism>
<proteinExistence type="evidence at protein level"/>
<feature type="peptide" id="PRO_0000044217" description="Sperm-activating peptide">
    <location>
        <begin position="1"/>
        <end position="9"/>
    </location>
</feature>
<feature type="disulfide bond" evidence="1">
    <location>
        <begin position="3"/>
        <end position="8"/>
    </location>
</feature>
<protein>
    <recommendedName>
        <fullName>Sperm-activating peptide</fullName>
        <shortName>SAP</shortName>
    </recommendedName>
</protein>
<accession>P24047</accession>
<name>SAP_STOVA</name>
<reference key="1">
    <citation type="journal article" date="1991" name="FEBS Lett.">
        <title>Determination of the amino acid sequence of an intramolecular disulfide linkage-containing sperm-activating peptide by tandem mass spectrometry.</title>
        <authorList>
            <person name="Yoshino K."/>
            <person name="Takao T."/>
            <person name="Shimonishi Y."/>
            <person name="Suzuki N."/>
        </authorList>
    </citation>
    <scope>PROTEIN SEQUENCE</scope>
    <scope>DISULFIDE BOND</scope>
    <source>
        <tissue>Egg jelly</tissue>
    </source>
</reference>
<comment type="function">
    <text>Causes stimulation of sperm respiration and motility through intracellular alkalinization, transient elevations of cAMP, cGMP and calcium levels in sperm cells, and transient activation and subsequent inactivation of the membrane form of guanylate cyclase.</text>
</comment>